<evidence type="ECO:0000255" key="1">
    <source>
        <dbReference type="HAMAP-Rule" id="MF_00184"/>
    </source>
</evidence>
<evidence type="ECO:0000255" key="2">
    <source>
        <dbReference type="PROSITE-ProRule" id="PRU01228"/>
    </source>
</evidence>
<sequence>MSDAQQITLIVDGEETKVTEGTTGAELFFERRDVVVARVNGVLKDLDQVLTEGADVEGVTIDSPDGLNVLRHSTAHVMAQAVQQLRPEAKLGIGPYITDGFYFDFDVADPFTPEDLRTLEKMMQKIINQNQKFVRRVVTEEEAREAMANEPYKLELLGKKNDASDAAEGVNVEVGAGDITIYDNVDRKSGESIWCDLCRGPHLQNTKIISNAFALTRSSAAYWLGNQNNQQLQRIYGTAWPTKEALKAYQERIAEAERRDHRKLGVELDLFSFPDELGSGLPVFHPKGGIIRKAMEDYSRQRHVDAGYEFVYTPHITKGHLYEVSGHLDWYKDGMFPAMQVDAEFNEDGSVRKPAQDYYLKPMNCPMHNLIFRSRGRSYRELPLRLFEFGSVYRYEKSGVVHGLTRVRGMTQDDAHIYCTREQMKDELTTTLNFVLGLLKDYGLDDFYLELSTKNEEKFVGDDAAWEEATRTLSEVAEASGLHLVPDPGGAAFYGPKISVQAKDALGRTWQMSTIQLDFNLPERFELEYQAADGTRQRPVMIHRALFGSVERFMGVLTEHYAGAFPAWLAPVQVVGIPVAETFNDYMFDVVGQLKAAGIRAEVDISSDRFPKKIRTASKDKIPFVLIAGGEDAEAGAVSFRFRDGSQDNGVPVAEAVRRIVDAVKNRES</sequence>
<dbReference type="EC" id="6.1.1.3" evidence="1"/>
<dbReference type="EMBL" id="CP000474">
    <property type="protein sequence ID" value="ABM09654.1"/>
    <property type="molecule type" value="Genomic_DNA"/>
</dbReference>
<dbReference type="RefSeq" id="WP_011774991.1">
    <property type="nucleotide sequence ID" value="NC_008711.1"/>
</dbReference>
<dbReference type="SMR" id="A1R735"/>
<dbReference type="STRING" id="290340.AAur_2309"/>
<dbReference type="KEGG" id="aau:AAur_2309"/>
<dbReference type="eggNOG" id="COG0441">
    <property type="taxonomic scope" value="Bacteria"/>
</dbReference>
<dbReference type="HOGENOM" id="CLU_008554_0_1_11"/>
<dbReference type="OrthoDB" id="9802304at2"/>
<dbReference type="Proteomes" id="UP000000637">
    <property type="component" value="Chromosome"/>
</dbReference>
<dbReference type="GO" id="GO:0005737">
    <property type="term" value="C:cytoplasm"/>
    <property type="evidence" value="ECO:0007669"/>
    <property type="project" value="UniProtKB-SubCell"/>
</dbReference>
<dbReference type="GO" id="GO:0005524">
    <property type="term" value="F:ATP binding"/>
    <property type="evidence" value="ECO:0007669"/>
    <property type="project" value="UniProtKB-UniRule"/>
</dbReference>
<dbReference type="GO" id="GO:0046872">
    <property type="term" value="F:metal ion binding"/>
    <property type="evidence" value="ECO:0007669"/>
    <property type="project" value="UniProtKB-KW"/>
</dbReference>
<dbReference type="GO" id="GO:0004829">
    <property type="term" value="F:threonine-tRNA ligase activity"/>
    <property type="evidence" value="ECO:0007669"/>
    <property type="project" value="UniProtKB-UniRule"/>
</dbReference>
<dbReference type="GO" id="GO:0000049">
    <property type="term" value="F:tRNA binding"/>
    <property type="evidence" value="ECO:0007669"/>
    <property type="project" value="UniProtKB-KW"/>
</dbReference>
<dbReference type="GO" id="GO:0006435">
    <property type="term" value="P:threonyl-tRNA aminoacylation"/>
    <property type="evidence" value="ECO:0007669"/>
    <property type="project" value="UniProtKB-UniRule"/>
</dbReference>
<dbReference type="CDD" id="cd01667">
    <property type="entry name" value="TGS_ThrRS"/>
    <property type="match status" value="1"/>
</dbReference>
<dbReference type="CDD" id="cd00860">
    <property type="entry name" value="ThrRS_anticodon"/>
    <property type="match status" value="1"/>
</dbReference>
<dbReference type="CDD" id="cd00771">
    <property type="entry name" value="ThrRS_core"/>
    <property type="match status" value="1"/>
</dbReference>
<dbReference type="FunFam" id="3.30.54.20:FF:000003">
    <property type="entry name" value="Threonine--tRNA ligase"/>
    <property type="match status" value="1"/>
</dbReference>
<dbReference type="FunFam" id="3.30.930.10:FF:000019">
    <property type="entry name" value="Threonine--tRNA ligase"/>
    <property type="match status" value="1"/>
</dbReference>
<dbReference type="FunFam" id="3.40.50.800:FF:000001">
    <property type="entry name" value="Threonine--tRNA ligase"/>
    <property type="match status" value="1"/>
</dbReference>
<dbReference type="FunFam" id="3.30.980.10:FF:000005">
    <property type="entry name" value="Threonyl-tRNA synthetase, mitochondrial"/>
    <property type="match status" value="1"/>
</dbReference>
<dbReference type="Gene3D" id="3.30.54.20">
    <property type="match status" value="1"/>
</dbReference>
<dbReference type="Gene3D" id="3.40.50.800">
    <property type="entry name" value="Anticodon-binding domain"/>
    <property type="match status" value="1"/>
</dbReference>
<dbReference type="Gene3D" id="3.30.930.10">
    <property type="entry name" value="Bira Bifunctional Protein, Domain 2"/>
    <property type="match status" value="1"/>
</dbReference>
<dbReference type="Gene3D" id="3.30.980.10">
    <property type="entry name" value="Threonyl-trna Synthetase, Chain A, domain 2"/>
    <property type="match status" value="1"/>
</dbReference>
<dbReference type="HAMAP" id="MF_00184">
    <property type="entry name" value="Thr_tRNA_synth"/>
    <property type="match status" value="1"/>
</dbReference>
<dbReference type="InterPro" id="IPR002314">
    <property type="entry name" value="aa-tRNA-synt_IIb"/>
</dbReference>
<dbReference type="InterPro" id="IPR006195">
    <property type="entry name" value="aa-tRNA-synth_II"/>
</dbReference>
<dbReference type="InterPro" id="IPR045864">
    <property type="entry name" value="aa-tRNA-synth_II/BPL/LPL"/>
</dbReference>
<dbReference type="InterPro" id="IPR004154">
    <property type="entry name" value="Anticodon-bd"/>
</dbReference>
<dbReference type="InterPro" id="IPR036621">
    <property type="entry name" value="Anticodon-bd_dom_sf"/>
</dbReference>
<dbReference type="InterPro" id="IPR004095">
    <property type="entry name" value="TGS"/>
</dbReference>
<dbReference type="InterPro" id="IPR002320">
    <property type="entry name" value="Thr-tRNA-ligase_IIa"/>
</dbReference>
<dbReference type="InterPro" id="IPR018163">
    <property type="entry name" value="Thr/Ala-tRNA-synth_IIc_edit"/>
</dbReference>
<dbReference type="InterPro" id="IPR047246">
    <property type="entry name" value="ThrRS_anticodon"/>
</dbReference>
<dbReference type="InterPro" id="IPR033728">
    <property type="entry name" value="ThrRS_core"/>
</dbReference>
<dbReference type="InterPro" id="IPR012947">
    <property type="entry name" value="tRNA_SAD"/>
</dbReference>
<dbReference type="NCBIfam" id="TIGR00418">
    <property type="entry name" value="thrS"/>
    <property type="match status" value="1"/>
</dbReference>
<dbReference type="PANTHER" id="PTHR11451:SF44">
    <property type="entry name" value="THREONINE--TRNA LIGASE, CHLOROPLASTIC_MITOCHONDRIAL 2"/>
    <property type="match status" value="1"/>
</dbReference>
<dbReference type="PANTHER" id="PTHR11451">
    <property type="entry name" value="THREONINE-TRNA LIGASE"/>
    <property type="match status" value="1"/>
</dbReference>
<dbReference type="Pfam" id="PF03129">
    <property type="entry name" value="HGTP_anticodon"/>
    <property type="match status" value="1"/>
</dbReference>
<dbReference type="Pfam" id="PF00587">
    <property type="entry name" value="tRNA-synt_2b"/>
    <property type="match status" value="1"/>
</dbReference>
<dbReference type="Pfam" id="PF07973">
    <property type="entry name" value="tRNA_SAD"/>
    <property type="match status" value="1"/>
</dbReference>
<dbReference type="PRINTS" id="PR01047">
    <property type="entry name" value="TRNASYNTHTHR"/>
</dbReference>
<dbReference type="SMART" id="SM00863">
    <property type="entry name" value="tRNA_SAD"/>
    <property type="match status" value="1"/>
</dbReference>
<dbReference type="SUPFAM" id="SSF52954">
    <property type="entry name" value="Class II aaRS ABD-related"/>
    <property type="match status" value="1"/>
</dbReference>
<dbReference type="SUPFAM" id="SSF55681">
    <property type="entry name" value="Class II aaRS and biotin synthetases"/>
    <property type="match status" value="1"/>
</dbReference>
<dbReference type="SUPFAM" id="SSF55186">
    <property type="entry name" value="ThrRS/AlaRS common domain"/>
    <property type="match status" value="1"/>
</dbReference>
<dbReference type="PROSITE" id="PS50862">
    <property type="entry name" value="AA_TRNA_LIGASE_II"/>
    <property type="match status" value="1"/>
</dbReference>
<dbReference type="PROSITE" id="PS51880">
    <property type="entry name" value="TGS"/>
    <property type="match status" value="1"/>
</dbReference>
<proteinExistence type="inferred from homology"/>
<gene>
    <name evidence="1" type="primary">thrS</name>
    <name type="ordered locus">AAur_2309</name>
</gene>
<keyword id="KW-0030">Aminoacyl-tRNA synthetase</keyword>
<keyword id="KW-0067">ATP-binding</keyword>
<keyword id="KW-0963">Cytoplasm</keyword>
<keyword id="KW-0436">Ligase</keyword>
<keyword id="KW-0479">Metal-binding</keyword>
<keyword id="KW-0547">Nucleotide-binding</keyword>
<keyword id="KW-0648">Protein biosynthesis</keyword>
<keyword id="KW-0694">RNA-binding</keyword>
<keyword id="KW-0820">tRNA-binding</keyword>
<keyword id="KW-0862">Zinc</keyword>
<accession>A1R735</accession>
<feature type="chain" id="PRO_1000020337" description="Threonine--tRNA ligase">
    <location>
        <begin position="1"/>
        <end position="669"/>
    </location>
</feature>
<feature type="domain" description="TGS" evidence="2">
    <location>
        <begin position="3"/>
        <end position="60"/>
    </location>
</feature>
<feature type="region of interest" description="Catalytic" evidence="1">
    <location>
        <begin position="260"/>
        <end position="566"/>
    </location>
</feature>
<feature type="binding site" evidence="1">
    <location>
        <position position="365"/>
    </location>
    <ligand>
        <name>Zn(2+)</name>
        <dbReference type="ChEBI" id="CHEBI:29105"/>
    </ligand>
</feature>
<feature type="binding site" evidence="1">
    <location>
        <position position="416"/>
    </location>
    <ligand>
        <name>Zn(2+)</name>
        <dbReference type="ChEBI" id="CHEBI:29105"/>
    </ligand>
</feature>
<feature type="binding site" evidence="1">
    <location>
        <position position="543"/>
    </location>
    <ligand>
        <name>Zn(2+)</name>
        <dbReference type="ChEBI" id="CHEBI:29105"/>
    </ligand>
</feature>
<organism>
    <name type="scientific">Paenarthrobacter aurescens (strain TC1)</name>
    <dbReference type="NCBI Taxonomy" id="290340"/>
    <lineage>
        <taxon>Bacteria</taxon>
        <taxon>Bacillati</taxon>
        <taxon>Actinomycetota</taxon>
        <taxon>Actinomycetes</taxon>
        <taxon>Micrococcales</taxon>
        <taxon>Micrococcaceae</taxon>
        <taxon>Paenarthrobacter</taxon>
    </lineage>
</organism>
<protein>
    <recommendedName>
        <fullName evidence="1">Threonine--tRNA ligase</fullName>
        <ecNumber evidence="1">6.1.1.3</ecNumber>
    </recommendedName>
    <alternativeName>
        <fullName evidence="1">Threonyl-tRNA synthetase</fullName>
        <shortName evidence="1">ThrRS</shortName>
    </alternativeName>
</protein>
<name>SYT_PAEAT</name>
<reference key="1">
    <citation type="journal article" date="2006" name="PLoS Genet.">
        <title>Secrets of soil survival revealed by the genome sequence of Arthrobacter aurescens TC1.</title>
        <authorList>
            <person name="Mongodin E.F."/>
            <person name="Shapir N."/>
            <person name="Daugherty S.C."/>
            <person name="DeBoy R.T."/>
            <person name="Emerson J.B."/>
            <person name="Shvartzbeyn A."/>
            <person name="Radune D."/>
            <person name="Vamathevan J."/>
            <person name="Riggs F."/>
            <person name="Grinberg V."/>
            <person name="Khouri H.M."/>
            <person name="Wackett L.P."/>
            <person name="Nelson K.E."/>
            <person name="Sadowsky M.J."/>
        </authorList>
    </citation>
    <scope>NUCLEOTIDE SEQUENCE [LARGE SCALE GENOMIC DNA]</scope>
    <source>
        <strain>TC1</strain>
    </source>
</reference>
<comment type="function">
    <text evidence="1">Catalyzes the attachment of threonine to tRNA(Thr) in a two-step reaction: L-threonine is first activated by ATP to form Thr-AMP and then transferred to the acceptor end of tRNA(Thr). Also edits incorrectly charged L-seryl-tRNA(Thr).</text>
</comment>
<comment type="catalytic activity">
    <reaction evidence="1">
        <text>tRNA(Thr) + L-threonine + ATP = L-threonyl-tRNA(Thr) + AMP + diphosphate + H(+)</text>
        <dbReference type="Rhea" id="RHEA:24624"/>
        <dbReference type="Rhea" id="RHEA-COMP:9670"/>
        <dbReference type="Rhea" id="RHEA-COMP:9704"/>
        <dbReference type="ChEBI" id="CHEBI:15378"/>
        <dbReference type="ChEBI" id="CHEBI:30616"/>
        <dbReference type="ChEBI" id="CHEBI:33019"/>
        <dbReference type="ChEBI" id="CHEBI:57926"/>
        <dbReference type="ChEBI" id="CHEBI:78442"/>
        <dbReference type="ChEBI" id="CHEBI:78534"/>
        <dbReference type="ChEBI" id="CHEBI:456215"/>
        <dbReference type="EC" id="6.1.1.3"/>
    </reaction>
</comment>
<comment type="cofactor">
    <cofactor evidence="1">
        <name>Zn(2+)</name>
        <dbReference type="ChEBI" id="CHEBI:29105"/>
    </cofactor>
    <text evidence="1">Binds 1 zinc ion per subunit.</text>
</comment>
<comment type="subunit">
    <text evidence="1">Homodimer.</text>
</comment>
<comment type="subcellular location">
    <subcellularLocation>
        <location evidence="1">Cytoplasm</location>
    </subcellularLocation>
</comment>
<comment type="similarity">
    <text evidence="1">Belongs to the class-II aminoacyl-tRNA synthetase family.</text>
</comment>